<organism>
    <name type="scientific">Candida parapsilosis</name>
    <name type="common">Yeast</name>
    <dbReference type="NCBI Taxonomy" id="5480"/>
    <lineage>
        <taxon>Eukaryota</taxon>
        <taxon>Fungi</taxon>
        <taxon>Dikarya</taxon>
        <taxon>Ascomycota</taxon>
        <taxon>Saccharomycotina</taxon>
        <taxon>Pichiomycetes</taxon>
        <taxon>Debaryomycetaceae</taxon>
        <taxon>Candida/Lodderomyces clade</taxon>
        <taxon>Candida</taxon>
    </lineage>
</organism>
<keyword id="KW-0249">Electron transport</keyword>
<keyword id="KW-0472">Membrane</keyword>
<keyword id="KW-0496">Mitochondrion</keyword>
<keyword id="KW-0520">NAD</keyword>
<keyword id="KW-0679">Respiratory chain</keyword>
<keyword id="KW-1278">Translocase</keyword>
<keyword id="KW-0812">Transmembrane</keyword>
<keyword id="KW-1133">Transmembrane helix</keyword>
<keyword id="KW-0813">Transport</keyword>
<keyword id="KW-0830">Ubiquinone</keyword>
<sequence length="84" mass="9246">MLALISILLLFYISQNNLITLLIAIEILLLTVTVKLIYMGSVYDDIYGTIFSIVIIILAGAESAIGLSILVSYYRLRGKVGHTI</sequence>
<geneLocation type="mitochondrion"/>
<evidence type="ECO:0000250" key="1"/>
<evidence type="ECO:0000255" key="2"/>
<evidence type="ECO:0000305" key="3"/>
<dbReference type="EC" id="7.1.1.2"/>
<dbReference type="EMBL" id="X74411">
    <property type="protein sequence ID" value="CAE54608.1"/>
    <property type="molecule type" value="Genomic_DNA"/>
</dbReference>
<dbReference type="RefSeq" id="NP_943646.1">
    <property type="nucleotide sequence ID" value="NC_005253.2"/>
</dbReference>
<dbReference type="SMR" id="P48929"/>
<dbReference type="GeneID" id="2657776"/>
<dbReference type="CGD" id="CAL0000145121">
    <property type="gene designation" value="CapafMp14"/>
</dbReference>
<dbReference type="VEuPathDB" id="FungiDB:CapafMp14"/>
<dbReference type="GO" id="GO:0031966">
    <property type="term" value="C:mitochondrial membrane"/>
    <property type="evidence" value="ECO:0007669"/>
    <property type="project" value="UniProtKB-SubCell"/>
</dbReference>
<dbReference type="GO" id="GO:0030964">
    <property type="term" value="C:NADH dehydrogenase complex"/>
    <property type="evidence" value="ECO:0007669"/>
    <property type="project" value="TreeGrafter"/>
</dbReference>
<dbReference type="GO" id="GO:0008137">
    <property type="term" value="F:NADH dehydrogenase (ubiquinone) activity"/>
    <property type="evidence" value="ECO:0007669"/>
    <property type="project" value="UniProtKB-EC"/>
</dbReference>
<dbReference type="GO" id="GO:0042773">
    <property type="term" value="P:ATP synthesis coupled electron transport"/>
    <property type="evidence" value="ECO:0007669"/>
    <property type="project" value="InterPro"/>
</dbReference>
<dbReference type="FunFam" id="1.10.287.3510:FF:000011">
    <property type="entry name" value="NADH-ubiquinone oxidoreductase chain 4L"/>
    <property type="match status" value="1"/>
</dbReference>
<dbReference type="Gene3D" id="1.10.287.3510">
    <property type="match status" value="1"/>
</dbReference>
<dbReference type="InterPro" id="IPR001133">
    <property type="entry name" value="NADH_UbQ_OxRdtase_chain4L/K"/>
</dbReference>
<dbReference type="InterPro" id="IPR039428">
    <property type="entry name" value="NUOK/Mnh_C1-like"/>
</dbReference>
<dbReference type="PANTHER" id="PTHR11434:SF16">
    <property type="entry name" value="NADH-UBIQUINONE OXIDOREDUCTASE CHAIN 4L"/>
    <property type="match status" value="1"/>
</dbReference>
<dbReference type="PANTHER" id="PTHR11434">
    <property type="entry name" value="NADH-UBIQUINONE OXIDOREDUCTASE SUBUNIT ND4L"/>
    <property type="match status" value="1"/>
</dbReference>
<dbReference type="Pfam" id="PF00420">
    <property type="entry name" value="Oxidored_q2"/>
    <property type="match status" value="1"/>
</dbReference>
<reference key="1">
    <citation type="journal article" date="1994" name="J. Bacteriol.">
        <title>NADH dehydrogenase subunit genes in the mitochondrial DNA of yeasts.</title>
        <authorList>
            <person name="Nosek J."/>
            <person name="Fukuhara H."/>
        </authorList>
    </citation>
    <scope>NUCLEOTIDE SEQUENCE [GENOMIC DNA]</scope>
    <source>
        <strain>SR23 / CBS 7157</strain>
    </source>
</reference>
<reference key="2">
    <citation type="journal article" date="2004" name="Mol. Genet. Genomics">
        <title>Complete DNA sequence of the linear mitochondrial genome of the pathogenic yeast Candida parapsilosis.</title>
        <authorList>
            <person name="Nosek J."/>
            <person name="Novotna M."/>
            <person name="Hlavatovicova Z."/>
            <person name="Ussery D.W."/>
            <person name="Fajkus J."/>
            <person name="Tomaska L."/>
        </authorList>
    </citation>
    <scope>NUCLEOTIDE SEQUENCE [LARGE SCALE GENOMIC DNA]</scope>
    <source>
        <strain>SR23 / CBS 7157</strain>
    </source>
</reference>
<protein>
    <recommendedName>
        <fullName>NADH-ubiquinone oxidoreductase chain 4L</fullName>
        <ecNumber>7.1.1.2</ecNumber>
    </recommendedName>
    <alternativeName>
        <fullName>NADH dehydrogenase subunit 4L</fullName>
    </alternativeName>
</protein>
<proteinExistence type="inferred from homology"/>
<comment type="function">
    <text evidence="1">Core subunit of the mitochondrial membrane respiratory chain NADH dehydrogenase (Complex I) that is believed to belong to the minimal assembly required for catalysis. Complex I functions in the transfer of electrons from NADH to the respiratory chain. The immediate electron acceptor for the enzyme is believed to be ubiquinone (By similarity).</text>
</comment>
<comment type="catalytic activity">
    <reaction>
        <text>a ubiquinone + NADH + 5 H(+)(in) = a ubiquinol + NAD(+) + 4 H(+)(out)</text>
        <dbReference type="Rhea" id="RHEA:29091"/>
        <dbReference type="Rhea" id="RHEA-COMP:9565"/>
        <dbReference type="Rhea" id="RHEA-COMP:9566"/>
        <dbReference type="ChEBI" id="CHEBI:15378"/>
        <dbReference type="ChEBI" id="CHEBI:16389"/>
        <dbReference type="ChEBI" id="CHEBI:17976"/>
        <dbReference type="ChEBI" id="CHEBI:57540"/>
        <dbReference type="ChEBI" id="CHEBI:57945"/>
        <dbReference type="EC" id="7.1.1.2"/>
    </reaction>
</comment>
<comment type="subcellular location">
    <subcellularLocation>
        <location evidence="1">Mitochondrion membrane</location>
        <topology evidence="1">Multi-pass membrane protein</topology>
    </subcellularLocation>
</comment>
<comment type="similarity">
    <text evidence="3">Belongs to the complex I subunit 4L family.</text>
</comment>
<feature type="chain" id="PRO_0000118403" description="NADH-ubiquinone oxidoreductase chain 4L">
    <location>
        <begin position="1"/>
        <end position="84"/>
    </location>
</feature>
<feature type="transmembrane region" description="Helical" evidence="2">
    <location>
        <begin position="7"/>
        <end position="29"/>
    </location>
</feature>
<feature type="transmembrane region" description="Helical" evidence="2">
    <location>
        <begin position="50"/>
        <end position="70"/>
    </location>
</feature>
<accession>P48929</accession>
<gene>
    <name type="primary">ND4L</name>
    <name type="synonym">NAD4L</name>
</gene>
<name>NU4LM_CANPA</name>